<sequence>MLPEPININKWIEENGHLLQPPVNNYCLHRGGFTIMIVGGPNERTDYHINETPEHFHQLKGAMCLKVVDDGEFRDIIINEGDSFLLPGNTPHNPVRFADTIGLVVEQDRPETALDRLRWYCSNCREIVHEAAFHLTDLGTQIKEAILAFDGDKESRTCKKCGTLNYSKPQ</sequence>
<proteinExistence type="inferred from homology"/>
<reference key="1">
    <citation type="journal article" date="2007" name="Nat. Biotechnol.">
        <title>Genome sequence of the lignocellulose-bioconverting and xylose-fermenting yeast Pichia stipitis.</title>
        <authorList>
            <person name="Jeffries T.W."/>
            <person name="Grigoriev I.V."/>
            <person name="Grimwood J."/>
            <person name="Laplaza J.M."/>
            <person name="Aerts A."/>
            <person name="Salamov A."/>
            <person name="Schmutz J."/>
            <person name="Lindquist E."/>
            <person name="Dehal P."/>
            <person name="Shapiro H."/>
            <person name="Jin Y.-S."/>
            <person name="Passoth V."/>
            <person name="Richardson P.M."/>
        </authorList>
    </citation>
    <scope>NUCLEOTIDE SEQUENCE [LARGE SCALE GENOMIC DNA]</scope>
    <source>
        <strain>ATCC 58785 / CBS 6054 / NBRC 10063 / NRRL Y-11545</strain>
    </source>
</reference>
<comment type="function">
    <text evidence="1">Catalyzes the oxidative ring opening of 3-hydroxyanthranilate to 2-amino-3-carboxymuconate semialdehyde, which spontaneously cyclizes to quinolinate.</text>
</comment>
<comment type="catalytic activity">
    <reaction evidence="1">
        <text>3-hydroxyanthranilate + O2 = (2Z,4Z)-2-amino-3-carboxymuconate 6-semialdehyde</text>
        <dbReference type="Rhea" id="RHEA:17953"/>
        <dbReference type="ChEBI" id="CHEBI:15379"/>
        <dbReference type="ChEBI" id="CHEBI:36559"/>
        <dbReference type="ChEBI" id="CHEBI:77612"/>
        <dbReference type="EC" id="1.13.11.6"/>
    </reaction>
</comment>
<comment type="cofactor">
    <cofactor evidence="1">
        <name>Fe(2+)</name>
        <dbReference type="ChEBI" id="CHEBI:29033"/>
    </cofactor>
</comment>
<comment type="pathway">
    <text evidence="1">Cofactor biosynthesis; NAD(+) biosynthesis; quinolinate from L-kynurenine: step 3/3.</text>
</comment>
<comment type="subcellular location">
    <subcellularLocation>
        <location evidence="1">Cytoplasm</location>
    </subcellularLocation>
</comment>
<comment type="similarity">
    <text evidence="1">Belongs to the 3-HAO family.</text>
</comment>
<feature type="chain" id="PRO_0000361993" description="3-hydroxyanthranilate 3,4-dioxygenase">
    <location>
        <begin position="1"/>
        <end position="170"/>
    </location>
</feature>
<feature type="binding site" evidence="1">
    <location>
        <position position="44"/>
    </location>
    <ligand>
        <name>O2</name>
        <dbReference type="ChEBI" id="CHEBI:15379"/>
    </ligand>
</feature>
<feature type="binding site" evidence="1">
    <location>
        <position position="48"/>
    </location>
    <ligand>
        <name>Fe cation</name>
        <dbReference type="ChEBI" id="CHEBI:24875"/>
        <note>catalytic</note>
    </ligand>
</feature>
<feature type="binding site" evidence="1">
    <location>
        <position position="54"/>
    </location>
    <ligand>
        <name>Fe cation</name>
        <dbReference type="ChEBI" id="CHEBI:24875"/>
        <note>catalytic</note>
    </ligand>
</feature>
<feature type="binding site" evidence="1">
    <location>
        <position position="54"/>
    </location>
    <ligand>
        <name>substrate</name>
    </ligand>
</feature>
<feature type="binding site" evidence="1">
    <location>
        <position position="92"/>
    </location>
    <ligand>
        <name>Fe cation</name>
        <dbReference type="ChEBI" id="CHEBI:24875"/>
        <note>catalytic</note>
    </ligand>
</feature>
<feature type="binding site" evidence="1">
    <location>
        <position position="96"/>
    </location>
    <ligand>
        <name>substrate</name>
    </ligand>
</feature>
<feature type="binding site" evidence="1">
    <location>
        <position position="106"/>
    </location>
    <ligand>
        <name>substrate</name>
    </ligand>
</feature>
<feature type="binding site" evidence="1">
    <location>
        <position position="121"/>
    </location>
    <ligand>
        <name>a divalent metal cation</name>
        <dbReference type="ChEBI" id="CHEBI:60240"/>
    </ligand>
</feature>
<feature type="binding site" evidence="1">
    <location>
        <position position="124"/>
    </location>
    <ligand>
        <name>a divalent metal cation</name>
        <dbReference type="ChEBI" id="CHEBI:60240"/>
    </ligand>
</feature>
<feature type="binding site" evidence="1">
    <location>
        <position position="158"/>
    </location>
    <ligand>
        <name>a divalent metal cation</name>
        <dbReference type="ChEBI" id="CHEBI:60240"/>
    </ligand>
</feature>
<feature type="binding site" evidence="1">
    <location>
        <position position="161"/>
    </location>
    <ligand>
        <name>a divalent metal cation</name>
        <dbReference type="ChEBI" id="CHEBI:60240"/>
    </ligand>
</feature>
<protein>
    <recommendedName>
        <fullName evidence="1">3-hydroxyanthranilate 3,4-dioxygenase</fullName>
        <ecNumber evidence="1">1.13.11.6</ecNumber>
    </recommendedName>
    <alternativeName>
        <fullName evidence="1">3-hydroxyanthranilate oxygenase</fullName>
        <shortName evidence="1">3-HAO</shortName>
    </alternativeName>
    <alternativeName>
        <fullName evidence="1">3-hydroxyanthranilic acid dioxygenase</fullName>
        <shortName evidence="1">HAD</shortName>
    </alternativeName>
    <alternativeName>
        <fullName evidence="1">Biosynthesis of nicotinic acid protein 1</fullName>
    </alternativeName>
</protein>
<evidence type="ECO:0000255" key="1">
    <source>
        <dbReference type="HAMAP-Rule" id="MF_03019"/>
    </source>
</evidence>
<dbReference type="EC" id="1.13.11.6" evidence="1"/>
<dbReference type="EMBL" id="CP000496">
    <property type="protein sequence ID" value="ABN64447.1"/>
    <property type="molecule type" value="Genomic_DNA"/>
</dbReference>
<dbReference type="RefSeq" id="XP_001382476.1">
    <property type="nucleotide sequence ID" value="XM_001382439.1"/>
</dbReference>
<dbReference type="SMR" id="A3LP72"/>
<dbReference type="FunCoup" id="A3LP72">
    <property type="interactions" value="170"/>
</dbReference>
<dbReference type="STRING" id="322104.A3LP72"/>
<dbReference type="GeneID" id="4837528"/>
<dbReference type="KEGG" id="pic:PICST_76205"/>
<dbReference type="eggNOG" id="KOG3995">
    <property type="taxonomic scope" value="Eukaryota"/>
</dbReference>
<dbReference type="HOGENOM" id="CLU_095765_0_0_1"/>
<dbReference type="InParanoid" id="A3LP72"/>
<dbReference type="OMA" id="KPPVGNQ"/>
<dbReference type="OrthoDB" id="204928at2759"/>
<dbReference type="UniPathway" id="UPA00253">
    <property type="reaction ID" value="UER00330"/>
</dbReference>
<dbReference type="Proteomes" id="UP000002258">
    <property type="component" value="Chromosome 2"/>
</dbReference>
<dbReference type="GO" id="GO:0005737">
    <property type="term" value="C:cytoplasm"/>
    <property type="evidence" value="ECO:0007669"/>
    <property type="project" value="UniProtKB-SubCell"/>
</dbReference>
<dbReference type="GO" id="GO:0000334">
    <property type="term" value="F:3-hydroxyanthranilate 3,4-dioxygenase activity"/>
    <property type="evidence" value="ECO:0007669"/>
    <property type="project" value="UniProtKB-UniRule"/>
</dbReference>
<dbReference type="GO" id="GO:0008198">
    <property type="term" value="F:ferrous iron binding"/>
    <property type="evidence" value="ECO:0007669"/>
    <property type="project" value="UniProtKB-UniRule"/>
</dbReference>
<dbReference type="GO" id="GO:0034354">
    <property type="term" value="P:'de novo' NAD biosynthetic process from L-tryptophan"/>
    <property type="evidence" value="ECO:0007669"/>
    <property type="project" value="UniProtKB-UniRule"/>
</dbReference>
<dbReference type="GO" id="GO:0043420">
    <property type="term" value="P:anthranilate metabolic process"/>
    <property type="evidence" value="ECO:0007669"/>
    <property type="project" value="UniProtKB-UniRule"/>
</dbReference>
<dbReference type="GO" id="GO:0006569">
    <property type="term" value="P:L-tryptophan catabolic process"/>
    <property type="evidence" value="ECO:0007669"/>
    <property type="project" value="UniProtKB-UniRule"/>
</dbReference>
<dbReference type="GO" id="GO:0019805">
    <property type="term" value="P:quinolinate biosynthetic process"/>
    <property type="evidence" value="ECO:0007669"/>
    <property type="project" value="UniProtKB-UniRule"/>
</dbReference>
<dbReference type="CDD" id="cd06123">
    <property type="entry name" value="cupin_HAO"/>
    <property type="match status" value="1"/>
</dbReference>
<dbReference type="FunFam" id="2.60.120.10:FF:000093">
    <property type="entry name" value="3-hydroxyanthranilate 3,4-dioxygenase"/>
    <property type="match status" value="1"/>
</dbReference>
<dbReference type="Gene3D" id="2.60.120.10">
    <property type="entry name" value="Jelly Rolls"/>
    <property type="match status" value="1"/>
</dbReference>
<dbReference type="HAMAP" id="MF_00825">
    <property type="entry name" value="3_HAO"/>
    <property type="match status" value="1"/>
</dbReference>
<dbReference type="InterPro" id="IPR010329">
    <property type="entry name" value="3hydroanth_dOase"/>
</dbReference>
<dbReference type="InterPro" id="IPR014710">
    <property type="entry name" value="RmlC-like_jellyroll"/>
</dbReference>
<dbReference type="InterPro" id="IPR011051">
    <property type="entry name" value="RmlC_Cupin_sf"/>
</dbReference>
<dbReference type="NCBIfam" id="TIGR03037">
    <property type="entry name" value="anthran_nbaC"/>
    <property type="match status" value="1"/>
</dbReference>
<dbReference type="PANTHER" id="PTHR15497">
    <property type="entry name" value="3-HYDROXYANTHRANILATE 3,4-DIOXYGENASE"/>
    <property type="match status" value="1"/>
</dbReference>
<dbReference type="PANTHER" id="PTHR15497:SF1">
    <property type="entry name" value="3-HYDROXYANTHRANILATE 3,4-DIOXYGENASE"/>
    <property type="match status" value="1"/>
</dbReference>
<dbReference type="Pfam" id="PF06052">
    <property type="entry name" value="3-HAO"/>
    <property type="match status" value="1"/>
</dbReference>
<dbReference type="SUPFAM" id="SSF51182">
    <property type="entry name" value="RmlC-like cupins"/>
    <property type="match status" value="1"/>
</dbReference>
<accession>A3LP72</accession>
<keyword id="KW-0963">Cytoplasm</keyword>
<keyword id="KW-0223">Dioxygenase</keyword>
<keyword id="KW-0408">Iron</keyword>
<keyword id="KW-0479">Metal-binding</keyword>
<keyword id="KW-0560">Oxidoreductase</keyword>
<keyword id="KW-0662">Pyridine nucleotide biosynthesis</keyword>
<keyword id="KW-1185">Reference proteome</keyword>
<name>3HAO_PICST</name>
<gene>
    <name evidence="1" type="primary">BNA1</name>
    <name type="ORF">PICST_76205</name>
</gene>
<organism>
    <name type="scientific">Scheffersomyces stipitis (strain ATCC 58785 / CBS 6054 / NBRC 10063 / NRRL Y-11545)</name>
    <name type="common">Yeast</name>
    <name type="synonym">Pichia stipitis</name>
    <dbReference type="NCBI Taxonomy" id="322104"/>
    <lineage>
        <taxon>Eukaryota</taxon>
        <taxon>Fungi</taxon>
        <taxon>Dikarya</taxon>
        <taxon>Ascomycota</taxon>
        <taxon>Saccharomycotina</taxon>
        <taxon>Pichiomycetes</taxon>
        <taxon>Debaryomycetaceae</taxon>
        <taxon>Scheffersomyces</taxon>
    </lineage>
</organism>